<feature type="signal peptide" evidence="2">
    <location>
        <begin position="1"/>
        <end position="19"/>
    </location>
</feature>
<feature type="chain" id="PRO_0000408608" description="Long chronological lifespan protein 2">
    <location>
        <begin position="20"/>
        <end position="134"/>
    </location>
</feature>
<sequence>MKLLGTIIGSAFFLQAVSGFFFDSGHQNRQQQQQQQQQRDVGSYQQMFLDNDCPHYLCPQTLDCVRQKSDCACPFPNSQLKCNLPNGQVICISKPATHDPTLVEIYDDPVMGPAQRTEGFRDCGWILDVYDGKI</sequence>
<dbReference type="EMBL" id="CR382126">
    <property type="protein sequence ID" value="CAG98679.1"/>
    <property type="molecule type" value="Genomic_DNA"/>
</dbReference>
<dbReference type="RefSeq" id="XP_455971.1">
    <property type="nucleotide sequence ID" value="XM_455971.1"/>
</dbReference>
<dbReference type="FunCoup" id="Q6CJB8">
    <property type="interactions" value="28"/>
</dbReference>
<dbReference type="STRING" id="284590.Q6CJB8"/>
<dbReference type="PaxDb" id="284590-Q6CJB8"/>
<dbReference type="KEGG" id="kla:KLLA0_F19844g"/>
<dbReference type="eggNOG" id="ENOG502S416">
    <property type="taxonomic scope" value="Eukaryota"/>
</dbReference>
<dbReference type="HOGENOM" id="CLU_142363_1_0_1"/>
<dbReference type="InParanoid" id="Q6CJB8"/>
<dbReference type="OMA" id="KPATHDE"/>
<dbReference type="Proteomes" id="UP000000598">
    <property type="component" value="Chromosome F"/>
</dbReference>
<dbReference type="GO" id="GO:0036503">
    <property type="term" value="P:ERAD pathway"/>
    <property type="evidence" value="ECO:0007669"/>
    <property type="project" value="TreeGrafter"/>
</dbReference>
<dbReference type="CDD" id="cd23996">
    <property type="entry name" value="LCL2-like"/>
    <property type="match status" value="1"/>
</dbReference>
<dbReference type="InterPro" id="IPR034543">
    <property type="entry name" value="LCL2"/>
</dbReference>
<dbReference type="PANTHER" id="PTHR38425">
    <property type="entry name" value="LONG CHRONOLOGICAL LIFESPAN PROTEIN 2"/>
    <property type="match status" value="1"/>
</dbReference>
<dbReference type="PANTHER" id="PTHR38425:SF1">
    <property type="entry name" value="LONG CHRONOLOGICAL LIFESPAN PROTEIN 2"/>
    <property type="match status" value="1"/>
</dbReference>
<comment type="function">
    <text evidence="1">Probable component of the endoplasmic reticulum-associated degradation (ERAD) pathway.</text>
</comment>
<comment type="similarity">
    <text evidence="3">Belongs to the LCL2 family.</text>
</comment>
<name>LCL2_KLULA</name>
<keyword id="KW-1185">Reference proteome</keyword>
<keyword id="KW-0732">Signal</keyword>
<proteinExistence type="inferred from homology"/>
<protein>
    <recommendedName>
        <fullName>Long chronological lifespan protein 2</fullName>
    </recommendedName>
</protein>
<organism>
    <name type="scientific">Kluyveromyces lactis (strain ATCC 8585 / CBS 2359 / DSM 70799 / NBRC 1267 / NRRL Y-1140 / WM37)</name>
    <name type="common">Yeast</name>
    <name type="synonym">Candida sphaerica</name>
    <dbReference type="NCBI Taxonomy" id="284590"/>
    <lineage>
        <taxon>Eukaryota</taxon>
        <taxon>Fungi</taxon>
        <taxon>Dikarya</taxon>
        <taxon>Ascomycota</taxon>
        <taxon>Saccharomycotina</taxon>
        <taxon>Saccharomycetes</taxon>
        <taxon>Saccharomycetales</taxon>
        <taxon>Saccharomycetaceae</taxon>
        <taxon>Kluyveromyces</taxon>
    </lineage>
</organism>
<reference key="1">
    <citation type="journal article" date="2004" name="Nature">
        <title>Genome evolution in yeasts.</title>
        <authorList>
            <person name="Dujon B."/>
            <person name="Sherman D."/>
            <person name="Fischer G."/>
            <person name="Durrens P."/>
            <person name="Casaregola S."/>
            <person name="Lafontaine I."/>
            <person name="de Montigny J."/>
            <person name="Marck C."/>
            <person name="Neuveglise C."/>
            <person name="Talla E."/>
            <person name="Goffard N."/>
            <person name="Frangeul L."/>
            <person name="Aigle M."/>
            <person name="Anthouard V."/>
            <person name="Babour A."/>
            <person name="Barbe V."/>
            <person name="Barnay S."/>
            <person name="Blanchin S."/>
            <person name="Beckerich J.-M."/>
            <person name="Beyne E."/>
            <person name="Bleykasten C."/>
            <person name="Boisrame A."/>
            <person name="Boyer J."/>
            <person name="Cattolico L."/>
            <person name="Confanioleri F."/>
            <person name="de Daruvar A."/>
            <person name="Despons L."/>
            <person name="Fabre E."/>
            <person name="Fairhead C."/>
            <person name="Ferry-Dumazet H."/>
            <person name="Groppi A."/>
            <person name="Hantraye F."/>
            <person name="Hennequin C."/>
            <person name="Jauniaux N."/>
            <person name="Joyet P."/>
            <person name="Kachouri R."/>
            <person name="Kerrest A."/>
            <person name="Koszul R."/>
            <person name="Lemaire M."/>
            <person name="Lesur I."/>
            <person name="Ma L."/>
            <person name="Muller H."/>
            <person name="Nicaud J.-M."/>
            <person name="Nikolski M."/>
            <person name="Oztas S."/>
            <person name="Ozier-Kalogeropoulos O."/>
            <person name="Pellenz S."/>
            <person name="Potier S."/>
            <person name="Richard G.-F."/>
            <person name="Straub M.-L."/>
            <person name="Suleau A."/>
            <person name="Swennen D."/>
            <person name="Tekaia F."/>
            <person name="Wesolowski-Louvel M."/>
            <person name="Westhof E."/>
            <person name="Wirth B."/>
            <person name="Zeniou-Meyer M."/>
            <person name="Zivanovic Y."/>
            <person name="Bolotin-Fukuhara M."/>
            <person name="Thierry A."/>
            <person name="Bouchier C."/>
            <person name="Caudron B."/>
            <person name="Scarpelli C."/>
            <person name="Gaillardin C."/>
            <person name="Weissenbach J."/>
            <person name="Wincker P."/>
            <person name="Souciet J.-L."/>
        </authorList>
    </citation>
    <scope>NUCLEOTIDE SEQUENCE [LARGE SCALE GENOMIC DNA]</scope>
    <source>
        <strain>ATCC 8585 / CBS 2359 / DSM 70799 / NBRC 1267 / NRRL Y-1140 / WM37</strain>
    </source>
</reference>
<evidence type="ECO:0000250" key="1"/>
<evidence type="ECO:0000255" key="2"/>
<evidence type="ECO:0000305" key="3"/>
<accession>Q6CJB8</accession>
<gene>
    <name type="primary">LCL2</name>
    <name type="ordered locus">KLLA0F19844g</name>
</gene>